<feature type="chain" id="PRO_0000200183" description="Homeobox protein Hox-C8">
    <location>
        <begin position="1"/>
        <end position="242"/>
    </location>
</feature>
<feature type="DNA-binding region" description="Homeobox" evidence="2">
    <location>
        <begin position="149"/>
        <end position="208"/>
    </location>
</feature>
<feature type="region of interest" description="Disordered" evidence="3">
    <location>
        <begin position="112"/>
        <end position="154"/>
    </location>
</feature>
<feature type="region of interest" description="Disordered" evidence="3">
    <location>
        <begin position="206"/>
        <end position="242"/>
    </location>
</feature>
<feature type="short sequence motif" description="Antp-type hexapeptide">
    <location>
        <begin position="138"/>
        <end position="143"/>
    </location>
</feature>
<feature type="compositionally biased region" description="Polar residues" evidence="3">
    <location>
        <begin position="124"/>
        <end position="136"/>
    </location>
</feature>
<feature type="compositionally biased region" description="Basic and acidic residues" evidence="3">
    <location>
        <begin position="206"/>
        <end position="220"/>
    </location>
</feature>
<feature type="compositionally biased region" description="Acidic residues" evidence="3">
    <location>
        <begin position="221"/>
        <end position="242"/>
    </location>
</feature>
<dbReference type="EMBL" id="X94179">
    <property type="protein sequence ID" value="CAA63888.1"/>
    <property type="molecule type" value="mRNA"/>
</dbReference>
<dbReference type="RefSeq" id="NP_990224.1">
    <property type="nucleotide sequence ID" value="NM_204893.3"/>
</dbReference>
<dbReference type="SMR" id="Q9YH13"/>
<dbReference type="FunCoup" id="Q9YH13">
    <property type="interactions" value="102"/>
</dbReference>
<dbReference type="STRING" id="9031.ENSGALP00000050413"/>
<dbReference type="Ensembl" id="ENSGALT00010062742.1">
    <property type="protein sequence ID" value="ENSGALP00010038783.1"/>
    <property type="gene ID" value="ENSGALG00010025708.1"/>
</dbReference>
<dbReference type="GeneID" id="395711"/>
<dbReference type="KEGG" id="gga:395711"/>
<dbReference type="CTD" id="3224"/>
<dbReference type="VEuPathDB" id="HostDB:geneid_395711"/>
<dbReference type="GeneTree" id="ENSGT00940000161194"/>
<dbReference type="InParanoid" id="Q9YH13"/>
<dbReference type="OMA" id="PSIMFPW"/>
<dbReference type="OrthoDB" id="6159439at2759"/>
<dbReference type="PhylomeDB" id="Q9YH13"/>
<dbReference type="Reactome" id="R-GGA-9762293">
    <property type="pathway name" value="Regulation of CDH11 gene transcription"/>
</dbReference>
<dbReference type="PRO" id="PR:Q9YH13"/>
<dbReference type="Proteomes" id="UP000000539">
    <property type="component" value="Chromosome 34"/>
</dbReference>
<dbReference type="Bgee" id="ENSGALG00000037262">
    <property type="expression patterns" value="Expressed in ovary and 2 other cell types or tissues"/>
</dbReference>
<dbReference type="GO" id="GO:0015630">
    <property type="term" value="C:microtubule cytoskeleton"/>
    <property type="evidence" value="ECO:0007669"/>
    <property type="project" value="Ensembl"/>
</dbReference>
<dbReference type="GO" id="GO:0005654">
    <property type="term" value="C:nucleoplasm"/>
    <property type="evidence" value="ECO:0007669"/>
    <property type="project" value="Ensembl"/>
</dbReference>
<dbReference type="GO" id="GO:0005634">
    <property type="term" value="C:nucleus"/>
    <property type="evidence" value="ECO:0000318"/>
    <property type="project" value="GO_Central"/>
</dbReference>
<dbReference type="GO" id="GO:0000981">
    <property type="term" value="F:DNA-binding transcription factor activity, RNA polymerase II-specific"/>
    <property type="evidence" value="ECO:0000318"/>
    <property type="project" value="GO_Central"/>
</dbReference>
<dbReference type="GO" id="GO:0000977">
    <property type="term" value="F:RNA polymerase II transcription regulatory region sequence-specific DNA binding"/>
    <property type="evidence" value="ECO:0000318"/>
    <property type="project" value="GO_Central"/>
</dbReference>
<dbReference type="GO" id="GO:0009952">
    <property type="term" value="P:anterior/posterior pattern specification"/>
    <property type="evidence" value="ECO:0007669"/>
    <property type="project" value="Ensembl"/>
</dbReference>
<dbReference type="GO" id="GO:0000122">
    <property type="term" value="P:negative regulation of transcription by RNA polymerase II"/>
    <property type="evidence" value="ECO:0007669"/>
    <property type="project" value="Ensembl"/>
</dbReference>
<dbReference type="GO" id="GO:0030182">
    <property type="term" value="P:neuron differentiation"/>
    <property type="evidence" value="ECO:0007669"/>
    <property type="project" value="Ensembl"/>
</dbReference>
<dbReference type="GO" id="GO:0006357">
    <property type="term" value="P:regulation of transcription by RNA polymerase II"/>
    <property type="evidence" value="ECO:0000318"/>
    <property type="project" value="GO_Central"/>
</dbReference>
<dbReference type="GO" id="GO:0048705">
    <property type="term" value="P:skeletal system morphogenesis"/>
    <property type="evidence" value="ECO:0007669"/>
    <property type="project" value="Ensembl"/>
</dbReference>
<dbReference type="CDD" id="cd00086">
    <property type="entry name" value="homeodomain"/>
    <property type="match status" value="1"/>
</dbReference>
<dbReference type="FunFam" id="1.10.10.60:FF:000072">
    <property type="entry name" value="Homeobox protein Hox-B8"/>
    <property type="match status" value="1"/>
</dbReference>
<dbReference type="Gene3D" id="1.10.10.60">
    <property type="entry name" value="Homeodomain-like"/>
    <property type="match status" value="1"/>
</dbReference>
<dbReference type="InterPro" id="IPR050948">
    <property type="entry name" value="Antp_homeobox_TF"/>
</dbReference>
<dbReference type="InterPro" id="IPR001356">
    <property type="entry name" value="HD"/>
</dbReference>
<dbReference type="InterPro" id="IPR020479">
    <property type="entry name" value="HD_metazoa"/>
</dbReference>
<dbReference type="InterPro" id="IPR001827">
    <property type="entry name" value="Homeobox_Antennapedia_CS"/>
</dbReference>
<dbReference type="InterPro" id="IPR017970">
    <property type="entry name" value="Homeobox_CS"/>
</dbReference>
<dbReference type="InterPro" id="IPR009057">
    <property type="entry name" value="Homeodomain-like_sf"/>
</dbReference>
<dbReference type="InterPro" id="IPR000047">
    <property type="entry name" value="HTH_motif"/>
</dbReference>
<dbReference type="PANTHER" id="PTHR46166">
    <property type="entry name" value="HOMEOBOX DOMAIN-CONTAINING PROTEIN"/>
    <property type="match status" value="1"/>
</dbReference>
<dbReference type="PANTHER" id="PTHR46166:SF4">
    <property type="entry name" value="HOMEOBOX PROTEIN HOX-C8"/>
    <property type="match status" value="1"/>
</dbReference>
<dbReference type="Pfam" id="PF00046">
    <property type="entry name" value="Homeodomain"/>
    <property type="match status" value="1"/>
</dbReference>
<dbReference type="PRINTS" id="PR00024">
    <property type="entry name" value="HOMEOBOX"/>
</dbReference>
<dbReference type="PRINTS" id="PR00031">
    <property type="entry name" value="HTHREPRESSR"/>
</dbReference>
<dbReference type="SMART" id="SM00389">
    <property type="entry name" value="HOX"/>
    <property type="match status" value="1"/>
</dbReference>
<dbReference type="SUPFAM" id="SSF46689">
    <property type="entry name" value="Homeodomain-like"/>
    <property type="match status" value="1"/>
</dbReference>
<dbReference type="PROSITE" id="PS00032">
    <property type="entry name" value="ANTENNAPEDIA"/>
    <property type="match status" value="1"/>
</dbReference>
<dbReference type="PROSITE" id="PS00027">
    <property type="entry name" value="HOMEOBOX_1"/>
    <property type="match status" value="1"/>
</dbReference>
<dbReference type="PROSITE" id="PS50071">
    <property type="entry name" value="HOMEOBOX_2"/>
    <property type="match status" value="1"/>
</dbReference>
<reference key="1">
    <citation type="journal article" date="1997" name="Dev. Dyn.">
        <title>CHOXC-8 and CHOXD-13 expression in embryonic chick skin and cutaneous appendage specification.</title>
        <authorList>
            <person name="Kanzler B."/>
            <person name="Prin F."/>
            <person name="Thelu J."/>
            <person name="Dhouailly D."/>
        </authorList>
    </citation>
    <scope>NUCLEOTIDE SEQUENCE [MRNA]</scope>
    <scope>DEVELOPMENTAL STAGE</scope>
    <source>
        <tissue>Skin</tissue>
    </source>
</reference>
<name>HXC8_CHICK</name>
<keyword id="KW-0217">Developmental protein</keyword>
<keyword id="KW-0238">DNA-binding</keyword>
<keyword id="KW-0371">Homeobox</keyword>
<keyword id="KW-0539">Nucleus</keyword>
<keyword id="KW-1185">Reference proteome</keyword>
<keyword id="KW-0804">Transcription</keyword>
<keyword id="KW-0805">Transcription regulation</keyword>
<accession>Q9YH13</accession>
<protein>
    <recommendedName>
        <fullName>Homeobox protein Hox-C8</fullName>
        <shortName>cHoxc-8</shortName>
    </recommendedName>
</protein>
<sequence>MSSYFVNPLFSKYKGGESLEPTYYDCRFPQSVSRSHALVYGPGTTAPTFQHPSHHVQEFFHHGTSSISNSGYQQNPCALACHGDASKFYGYEALPRQSLYGAQQETTVVQYPDCKSSSNSNSSEGQGHLNQNSSPSLMFPWMRPHAPGRRSGRQTYSRYQTLELEKEFLFNPYLTRKRRIEVSHALGLTERQVKIWFQNRRMKWKKENNKDKLPGARDEEKTEEEGNEEEEKEEEEKEESKD</sequence>
<gene>
    <name type="primary">HOXC8</name>
    <name type="synonym">HOXC-8</name>
</gene>
<evidence type="ECO:0000250" key="1"/>
<evidence type="ECO:0000255" key="2">
    <source>
        <dbReference type="PROSITE-ProRule" id="PRU00108"/>
    </source>
</evidence>
<evidence type="ECO:0000256" key="3">
    <source>
        <dbReference type="SAM" id="MobiDB-lite"/>
    </source>
</evidence>
<evidence type="ECO:0000269" key="4">
    <source>
    </source>
</evidence>
<evidence type="ECO:0000305" key="5"/>
<organism>
    <name type="scientific">Gallus gallus</name>
    <name type="common">Chicken</name>
    <dbReference type="NCBI Taxonomy" id="9031"/>
    <lineage>
        <taxon>Eukaryota</taxon>
        <taxon>Metazoa</taxon>
        <taxon>Chordata</taxon>
        <taxon>Craniata</taxon>
        <taxon>Vertebrata</taxon>
        <taxon>Euteleostomi</taxon>
        <taxon>Archelosauria</taxon>
        <taxon>Archosauria</taxon>
        <taxon>Dinosauria</taxon>
        <taxon>Saurischia</taxon>
        <taxon>Theropoda</taxon>
        <taxon>Coelurosauria</taxon>
        <taxon>Aves</taxon>
        <taxon>Neognathae</taxon>
        <taxon>Galloanserae</taxon>
        <taxon>Galliformes</taxon>
        <taxon>Phasianidae</taxon>
        <taxon>Phasianinae</taxon>
        <taxon>Gallus</taxon>
    </lineage>
</organism>
<proteinExistence type="evidence at transcript level"/>
<comment type="function">
    <text evidence="1">Sequence-specific transcription factor which is part of a developmental regulatory system that provides cells with specific positional identities on the anterior-posterior axis.</text>
</comment>
<comment type="subcellular location">
    <subcellularLocation>
        <location evidence="2">Nucleus</location>
    </subcellularLocation>
</comment>
<comment type="developmental stage">
    <text evidence="4">Transcripts are present at 3.5 dpc in the somitic cells, which give rise to the dorsal dermis by 5 dpc, and at 6.5 dpc to 8.5 dpc in the dorsal dermal and epidermal cells during the first stages of feather morphogenesis.</text>
</comment>
<comment type="similarity">
    <text evidence="5">Belongs to the Antp homeobox family.</text>
</comment>